<accession>P0AGF6</accession>
<accession>P05792</accession>
<accession>Q2M990</accession>
<name>TDCB_ECOLI</name>
<keyword id="KW-0021">Allosteric enzyme</keyword>
<keyword id="KW-0903">Direct protein sequencing</keyword>
<keyword id="KW-0456">Lyase</keyword>
<keyword id="KW-0547">Nucleotide-binding</keyword>
<keyword id="KW-0663">Pyridoxal phosphate</keyword>
<keyword id="KW-1185">Reference proteome</keyword>
<reference key="1">
    <citation type="journal article" date="1987" name="Proc. Natl. Acad. Sci. U.S.A.">
        <title>Covalent structure of biodegradative threonine dehydratase of Escherichia coli: homology with other dehydratases.</title>
        <authorList>
            <person name="Datta P."/>
            <person name="Goss T.J."/>
            <person name="Omnaas J.R."/>
            <person name="Patil R.V."/>
        </authorList>
    </citation>
    <scope>NUCLEOTIDE SEQUENCE [GENOMIC DNA]</scope>
    <source>
        <strain>K12 / W3110 / ATCC 27325 / DSM 5911</strain>
    </source>
</reference>
<reference key="2">
    <citation type="journal article" date="1989" name="Nucleic Acids Res.">
        <title>The complete nucleotide sequence of the tdc region of Escherichia coli.</title>
        <authorList>
            <person name="Schweizer H."/>
            <person name="Datta P."/>
        </authorList>
    </citation>
    <scope>NUCLEOTIDE SEQUENCE [GENOMIC DNA]</scope>
    <source>
        <strain>K12 / W3110 / ATCC 27325 / DSM 5911</strain>
    </source>
</reference>
<reference key="3">
    <citation type="journal article" date="1997" name="Science">
        <title>The complete genome sequence of Escherichia coli K-12.</title>
        <authorList>
            <person name="Blattner F.R."/>
            <person name="Plunkett G. III"/>
            <person name="Bloch C.A."/>
            <person name="Perna N.T."/>
            <person name="Burland V."/>
            <person name="Riley M."/>
            <person name="Collado-Vides J."/>
            <person name="Glasner J.D."/>
            <person name="Rode C.K."/>
            <person name="Mayhew G.F."/>
            <person name="Gregor J."/>
            <person name="Davis N.W."/>
            <person name="Kirkpatrick H.A."/>
            <person name="Goeden M.A."/>
            <person name="Rose D.J."/>
            <person name="Mau B."/>
            <person name="Shao Y."/>
        </authorList>
    </citation>
    <scope>NUCLEOTIDE SEQUENCE [LARGE SCALE GENOMIC DNA]</scope>
    <source>
        <strain>K12 / MG1655 / ATCC 47076</strain>
    </source>
</reference>
<reference key="4">
    <citation type="journal article" date="2006" name="Mol. Syst. Biol.">
        <title>Highly accurate genome sequences of Escherichia coli K-12 strains MG1655 and W3110.</title>
        <authorList>
            <person name="Hayashi K."/>
            <person name="Morooka N."/>
            <person name="Yamamoto Y."/>
            <person name="Fujita K."/>
            <person name="Isono K."/>
            <person name="Choi S."/>
            <person name="Ohtsubo E."/>
            <person name="Baba T."/>
            <person name="Wanner B.L."/>
            <person name="Mori H."/>
            <person name="Horiuchi T."/>
        </authorList>
    </citation>
    <scope>NUCLEOTIDE SEQUENCE [LARGE SCALE GENOMIC DNA]</scope>
    <source>
        <strain>K12 / W3110 / ATCC 27325 / DSM 5911</strain>
    </source>
</reference>
<reference key="5">
    <citation type="journal article" date="1982" name="Biochim. Biophys. Acta">
        <title>Chemical characterization of biodegradative threonine dehydratases from two enteric bacteria.</title>
        <authorList>
            <person name="Kim S.S."/>
            <person name="Datta P."/>
        </authorList>
    </citation>
    <scope>PROTEIN SEQUENCE OF 1-25</scope>
</reference>
<reference key="6">
    <citation type="journal article" date="1988" name="J. Bacteriol.">
        <title>Molecular characterization of the tdc operon of Escherichia coli K-12.</title>
        <authorList>
            <person name="Goss T.J."/>
            <person name="Schweizer H.P."/>
            <person name="Datta P."/>
        </authorList>
    </citation>
    <scope>NUCLEOTIDE SEQUENCE [GENOMIC DNA] OF 323-329</scope>
</reference>
<reference key="7">
    <citation type="journal article" date="1949" name="J. Biol. Chem.">
        <title>Serine and threonine desaminaes of Escherichia coli; activators for a cell-free enzyme.</title>
        <authorList>
            <person name="Wood W.A."/>
            <person name="Gunsalus I.C."/>
        </authorList>
    </citation>
    <scope>FUNCTION AS A THREONINE AND SERINE DEHYDRATASE</scope>
    <scope>BIOPHYSICOCHEMICAL PROPERTIES</scope>
    <scope>ACTIVITY REGULATION</scope>
</reference>
<reference key="8">
    <citation type="journal article" date="1957" name="J. Bacteriol.">
        <title>Threonine deamination in Escherichia coli. II. Evidence for two L-threonine deaminases.</title>
        <authorList>
            <person name="Umbarger H.E."/>
            <person name="Brown B."/>
        </authorList>
    </citation>
    <scope>FUNCTION AS A THREONINE AND SERINE DEHYDRATASE</scope>
    <scope>INDUCTION</scope>
    <scope>ACTIVITY REGULATION</scope>
</reference>
<reference key="9">
    <citation type="journal article" date="1965" name="J. Biol. Chem.">
        <title>The mechanism of action of 5'-adenylic acid-activated threonine dehydrase.</title>
        <authorList>
            <person name="Phillips A.T."/>
            <person name="Wood W.A."/>
        </authorList>
    </citation>
    <scope>REACTION MECHANISM</scope>
    <scope>COFACTOR</scope>
</reference>
<reference key="10">
    <citation type="journal article" date="1999" name="Appl. Environ. Microbiol.">
        <title>Expression of the Escherichia coli catabolic threonine dehydratase in Corynebacterium glutamicum and its effect on isoleucine production.</title>
        <authorList>
            <person name="Guillouet S."/>
            <person name="Rodal A.A."/>
            <person name="An G."/>
            <person name="Lessard P.A."/>
            <person name="Sinskey A.J."/>
        </authorList>
    </citation>
    <scope>FUNCTION IN CATABOLISM OF THREONINE</scope>
</reference>
<reference key="11">
    <citation type="journal article" date="2007" name="J. Biosci.">
        <title>Structure and function of enzymes involved in the anaerobic degradation of L-threonine to propionate.</title>
        <authorList>
            <person name="Simanshu D.K."/>
            <person name="Chittori S."/>
            <person name="Savithri H.S."/>
            <person name="Murthy M.R."/>
        </authorList>
    </citation>
    <scope>REVIEW</scope>
</reference>
<proteinExistence type="evidence at protein level"/>
<dbReference type="EC" id="4.3.1.19"/>
<dbReference type="EC" id="4.3.1.17"/>
<dbReference type="EMBL" id="M21312">
    <property type="protein sequence ID" value="AAA24660.1"/>
    <property type="molecule type" value="Genomic_DNA"/>
</dbReference>
<dbReference type="EMBL" id="X14430">
    <property type="protein sequence ID" value="CAA32593.1"/>
    <property type="molecule type" value="Genomic_DNA"/>
</dbReference>
<dbReference type="EMBL" id="U18997">
    <property type="protein sequence ID" value="AAA57921.1"/>
    <property type="molecule type" value="Genomic_DNA"/>
</dbReference>
<dbReference type="EMBL" id="U00096">
    <property type="protein sequence ID" value="AAC76152.1"/>
    <property type="molecule type" value="Genomic_DNA"/>
</dbReference>
<dbReference type="EMBL" id="AP009048">
    <property type="protein sequence ID" value="BAE77166.1"/>
    <property type="molecule type" value="Genomic_DNA"/>
</dbReference>
<dbReference type="EMBL" id="M23638">
    <property type="protein sequence ID" value="AAA24661.1"/>
    <property type="molecule type" value="Genomic_DNA"/>
</dbReference>
<dbReference type="PIR" id="A26367">
    <property type="entry name" value="DWECTD"/>
</dbReference>
<dbReference type="RefSeq" id="NP_417587.1">
    <property type="nucleotide sequence ID" value="NC_000913.3"/>
</dbReference>
<dbReference type="RefSeq" id="WP_000548347.1">
    <property type="nucleotide sequence ID" value="NZ_STEB01000001.1"/>
</dbReference>
<dbReference type="SMR" id="P0AGF6"/>
<dbReference type="BioGRID" id="4262419">
    <property type="interactions" value="26"/>
</dbReference>
<dbReference type="DIP" id="DIP-48063N"/>
<dbReference type="FunCoup" id="P0AGF6">
    <property type="interactions" value="689"/>
</dbReference>
<dbReference type="IntAct" id="P0AGF6">
    <property type="interactions" value="3"/>
</dbReference>
<dbReference type="STRING" id="511145.b3117"/>
<dbReference type="jPOST" id="P0AGF6"/>
<dbReference type="PaxDb" id="511145-b3117"/>
<dbReference type="EnsemblBacteria" id="AAC76152">
    <property type="protein sequence ID" value="AAC76152"/>
    <property type="gene ID" value="b3117"/>
</dbReference>
<dbReference type="GeneID" id="75205074"/>
<dbReference type="GeneID" id="947633"/>
<dbReference type="KEGG" id="ecj:JW3088"/>
<dbReference type="KEGG" id="eco:b3117"/>
<dbReference type="KEGG" id="ecoc:C3026_17000"/>
<dbReference type="PATRIC" id="fig|1411691.4.peg.3613"/>
<dbReference type="EchoBASE" id="EB0983"/>
<dbReference type="eggNOG" id="COG1171">
    <property type="taxonomic scope" value="Bacteria"/>
</dbReference>
<dbReference type="HOGENOM" id="CLU_021152_4_2_6"/>
<dbReference type="InParanoid" id="P0AGF6"/>
<dbReference type="OMA" id="LIHPFDH"/>
<dbReference type="OrthoDB" id="9811476at2"/>
<dbReference type="PhylomeDB" id="P0AGF6"/>
<dbReference type="BioCyc" id="EcoCyc:THREDEHYDCAT-MONOMER"/>
<dbReference type="BioCyc" id="MetaCyc:THREDEHYDCAT-MONOMER"/>
<dbReference type="SABIO-RK" id="P0AGF6"/>
<dbReference type="UniPathway" id="UPA00052">
    <property type="reaction ID" value="UER00507"/>
</dbReference>
<dbReference type="PRO" id="PR:P0AGF6"/>
<dbReference type="Proteomes" id="UP000000625">
    <property type="component" value="Chromosome"/>
</dbReference>
<dbReference type="GO" id="GO:0005829">
    <property type="term" value="C:cytosol"/>
    <property type="evidence" value="ECO:0000314"/>
    <property type="project" value="EcoCyc"/>
</dbReference>
<dbReference type="GO" id="GO:0032991">
    <property type="term" value="C:protein-containing complex"/>
    <property type="evidence" value="ECO:0000314"/>
    <property type="project" value="EcoCyc"/>
</dbReference>
<dbReference type="GO" id="GO:0016597">
    <property type="term" value="F:amino acid binding"/>
    <property type="evidence" value="ECO:0000314"/>
    <property type="project" value="EcoliWiki"/>
</dbReference>
<dbReference type="GO" id="GO:0003941">
    <property type="term" value="F:L-serine ammonia-lyase activity"/>
    <property type="evidence" value="ECO:0000314"/>
    <property type="project" value="EcoCyc"/>
</dbReference>
<dbReference type="GO" id="GO:0000166">
    <property type="term" value="F:nucleotide binding"/>
    <property type="evidence" value="ECO:0007669"/>
    <property type="project" value="UniProtKB-KW"/>
</dbReference>
<dbReference type="GO" id="GO:0030170">
    <property type="term" value="F:pyridoxal phosphate binding"/>
    <property type="evidence" value="ECO:0000314"/>
    <property type="project" value="EcoliWiki"/>
</dbReference>
<dbReference type="GO" id="GO:0004793">
    <property type="term" value="F:threonine aldolase activity"/>
    <property type="evidence" value="ECO:0000314"/>
    <property type="project" value="EcoliWiki"/>
</dbReference>
<dbReference type="GO" id="GO:0004794">
    <property type="term" value="F:threonine deaminase activity"/>
    <property type="evidence" value="ECO:0000314"/>
    <property type="project" value="EcoCyc"/>
</dbReference>
<dbReference type="GO" id="GO:0006565">
    <property type="term" value="P:L-serine catabolic process"/>
    <property type="evidence" value="ECO:0000314"/>
    <property type="project" value="EcoCyc"/>
</dbReference>
<dbReference type="GO" id="GO:0070689">
    <property type="term" value="P:L-threonine catabolic process to propionate"/>
    <property type="evidence" value="ECO:0007669"/>
    <property type="project" value="UniProtKB-UniPathway"/>
</dbReference>
<dbReference type="GO" id="GO:0006567">
    <property type="term" value="P:threonine catabolic process"/>
    <property type="evidence" value="ECO:0000314"/>
    <property type="project" value="EcoCyc"/>
</dbReference>
<dbReference type="CDD" id="cd01562">
    <property type="entry name" value="Thr-dehyd"/>
    <property type="match status" value="1"/>
</dbReference>
<dbReference type="FunFam" id="3.40.50.1100:FF:000007">
    <property type="entry name" value="L-threonine dehydratase catabolic TdcB"/>
    <property type="match status" value="1"/>
</dbReference>
<dbReference type="FunFam" id="3.40.50.1100:FF:000005">
    <property type="entry name" value="Threonine dehydratase catabolic"/>
    <property type="match status" value="1"/>
</dbReference>
<dbReference type="Gene3D" id="3.40.50.1100">
    <property type="match status" value="2"/>
</dbReference>
<dbReference type="InterPro" id="IPR050147">
    <property type="entry name" value="Ser/Thr_Dehydratase"/>
</dbReference>
<dbReference type="InterPro" id="IPR000634">
    <property type="entry name" value="Ser/Thr_deHydtase_PyrdxlP-BS"/>
</dbReference>
<dbReference type="InterPro" id="IPR005789">
    <property type="entry name" value="Thr_deHydtase_catblc"/>
</dbReference>
<dbReference type="InterPro" id="IPR001926">
    <property type="entry name" value="TrpB-like_PALP"/>
</dbReference>
<dbReference type="InterPro" id="IPR036052">
    <property type="entry name" value="TrpB-like_PALP_sf"/>
</dbReference>
<dbReference type="NCBIfam" id="TIGR01127">
    <property type="entry name" value="ilvA_1Cterm"/>
    <property type="match status" value="1"/>
</dbReference>
<dbReference type="NCBIfam" id="NF006389">
    <property type="entry name" value="PRK08638.1"/>
    <property type="match status" value="1"/>
</dbReference>
<dbReference type="PANTHER" id="PTHR48078:SF6">
    <property type="entry name" value="L-THREONINE DEHYDRATASE CATABOLIC TDCB"/>
    <property type="match status" value="1"/>
</dbReference>
<dbReference type="PANTHER" id="PTHR48078">
    <property type="entry name" value="THREONINE DEHYDRATASE, MITOCHONDRIAL-RELATED"/>
    <property type="match status" value="1"/>
</dbReference>
<dbReference type="Pfam" id="PF00291">
    <property type="entry name" value="PALP"/>
    <property type="match status" value="1"/>
</dbReference>
<dbReference type="SUPFAM" id="SSF53686">
    <property type="entry name" value="Tryptophan synthase beta subunit-like PLP-dependent enzymes"/>
    <property type="match status" value="1"/>
</dbReference>
<dbReference type="PROSITE" id="PS00165">
    <property type="entry name" value="DEHYDRATASE_SER_THR"/>
    <property type="match status" value="1"/>
</dbReference>
<gene>
    <name type="primary">tdcB</name>
    <name type="ordered locus">b3117</name>
    <name type="ordered locus">JW3088</name>
</gene>
<protein>
    <recommendedName>
        <fullName>L-threonine dehydratase catabolic TdcB</fullName>
        <ecNumber>4.3.1.19</ecNumber>
    </recommendedName>
    <alternativeName>
        <fullName>L-serine dehydratase</fullName>
        <ecNumber>4.3.1.17</ecNumber>
    </alternativeName>
    <alternativeName>
        <fullName>Threonine deaminase</fullName>
    </alternativeName>
</protein>
<organism>
    <name type="scientific">Escherichia coli (strain K12)</name>
    <dbReference type="NCBI Taxonomy" id="83333"/>
    <lineage>
        <taxon>Bacteria</taxon>
        <taxon>Pseudomonadati</taxon>
        <taxon>Pseudomonadota</taxon>
        <taxon>Gammaproteobacteria</taxon>
        <taxon>Enterobacterales</taxon>
        <taxon>Enterobacteriaceae</taxon>
        <taxon>Escherichia</taxon>
    </lineage>
</organism>
<feature type="chain" id="PRO_0000185582" description="L-threonine dehydratase catabolic TdcB">
    <location>
        <begin position="1"/>
        <end position="329"/>
    </location>
</feature>
<feature type="binding site" evidence="1">
    <location>
        <begin position="53"/>
        <end position="54"/>
    </location>
    <ligand>
        <name>AMP</name>
        <dbReference type="ChEBI" id="CHEBI:456215"/>
    </ligand>
</feature>
<feature type="binding site" evidence="1">
    <location>
        <position position="88"/>
    </location>
    <ligand>
        <name>AMP</name>
        <dbReference type="ChEBI" id="CHEBI:456215"/>
    </ligand>
</feature>
<feature type="binding site" evidence="1">
    <location>
        <begin position="119"/>
        <end position="120"/>
    </location>
    <ligand>
        <name>AMP</name>
        <dbReference type="ChEBI" id="CHEBI:456215"/>
    </ligand>
</feature>
<feature type="binding site" evidence="1">
    <location>
        <position position="314"/>
    </location>
    <ligand>
        <name>AMP</name>
        <dbReference type="ChEBI" id="CHEBI:456215"/>
    </ligand>
</feature>
<feature type="modified residue" description="N6-(pyridoxal phosphate)lysine" evidence="1">
    <location>
        <position position="58"/>
    </location>
</feature>
<evidence type="ECO:0000250" key="1"/>
<evidence type="ECO:0000269" key="2">
    <source>
    </source>
</evidence>
<evidence type="ECO:0000269" key="3">
    <source>
    </source>
</evidence>
<evidence type="ECO:0000269" key="4">
    <source>
    </source>
</evidence>
<evidence type="ECO:0000269" key="5">
    <source>
    </source>
</evidence>
<evidence type="ECO:0000305" key="6"/>
<comment type="function">
    <text evidence="2 3 4">Catalyzes the anaerobic formation of alpha-ketobutyrate and ammonia from threonine in a two-step reaction. The first step involved a dehydration of threonine and a production of enamine intermediates (aminocrotonate), which tautomerizes to its imine form (iminobutyrate). Both intermediates are unstable and short-lived. The second step is the nonenzymatic hydrolysis of the enamine/imine intermediates to form 2-ketobutyrate and free ammonia. In the low water environment of the cell, the second step is accelerated by RidA. TdcB also dehydrates serine to yield pyruvate via analogous enamine/imine intermediates.</text>
</comment>
<comment type="catalytic activity">
    <reaction>
        <text>L-threonine = 2-oxobutanoate + NH4(+)</text>
        <dbReference type="Rhea" id="RHEA:22108"/>
        <dbReference type="ChEBI" id="CHEBI:16763"/>
        <dbReference type="ChEBI" id="CHEBI:28938"/>
        <dbReference type="ChEBI" id="CHEBI:57926"/>
        <dbReference type="EC" id="4.3.1.19"/>
    </reaction>
</comment>
<comment type="catalytic activity">
    <reaction>
        <text>L-serine = pyruvate + NH4(+)</text>
        <dbReference type="Rhea" id="RHEA:19169"/>
        <dbReference type="ChEBI" id="CHEBI:15361"/>
        <dbReference type="ChEBI" id="CHEBI:28938"/>
        <dbReference type="ChEBI" id="CHEBI:33384"/>
        <dbReference type="EC" id="4.3.1.17"/>
    </reaction>
</comment>
<comment type="cofactor">
    <cofactor evidence="5">
        <name>pyridoxal 5'-phosphate</name>
        <dbReference type="ChEBI" id="CHEBI:597326"/>
    </cofactor>
</comment>
<comment type="activity regulation">
    <text evidence="3 4">Each protein molecule can bind up to four molecules of AMP, which act as an allosteric activator to the enzyme. The enzyme is also inhibited by alpha-keto acids and other catabolites.</text>
</comment>
<comment type="biophysicochemical properties">
    <kinetics>
        <KM evidence="4">0.3 uM for L-threonine (at 37 dregrees Celsius and at pH 7.8)</KM>
        <KM evidence="4">0.35 uM for L-serine (at 37 dregrees Celsius and at pH 7.8)</KM>
    </kinetics>
</comment>
<comment type="pathway">
    <text>Amino-acid degradation; L-threonine degradation via propanoate pathway; propanoate from L-threonine: step 1/4.</text>
</comment>
<comment type="subunit">
    <text evidence="1">In the native structure, TdcB is in a dimeric form, whereas in the TdcB-AMP complex, it exists in a tetrameric form (dimer of dimers).</text>
</comment>
<comment type="induction">
    <text evidence="3">In the absence of glucose and oxygen.</text>
</comment>
<comment type="similarity">
    <text evidence="6">Belongs to the serine/threonine dehydratase family.</text>
</comment>
<sequence length="329" mass="35232">MHITYDLPVAIDDIIEAKQRLAGRIYKTGMPRSNYFSERCKGEIFLKFENMQRTGSFKIRGAFNKLSSLTDAEKRKGVVACSAGNHAQGVSLSCAMLGIDGKVVMPKGAPKSKVAATCDYSAEVVLHGDNFNDTIAKVSEIVEMEGRIFIPPYDDPKVIAGQGTIGLEIMEDLYDVDNVIVPIGGGGLIAGIAVAIKSINPTIRVIGVQSENVHGMAASFHSGEITTHRTTGTLADGCDVSRPGNLTYEIVRELVDDIVLVSEDEIRNSMIALIQRNKVVTEGAGALACAALLSGKLDQYIQNRKTVSIISGGNIDLSRVSQITGFVDA</sequence>